<gene>
    <name evidence="1" type="primary">cca</name>
    <name type="ordered locus">Shewmr4_2897</name>
</gene>
<proteinExistence type="inferred from homology"/>
<sequence>MKIYLVGGAVRDSLLNLPIKDKDFMVVGATPEQMLQLGYRQVGKDFPVFLHPKTQQEYALARTERKVGLGYGGFSCYASPEVTLEQDLLRRDLTINAIAQDEAGNLHDPFHGIADIEARQLRHVSAAFSEDPLRVLRVARFAARFHGLGFEIAPETMALMQHMSQTEELTALTPERVWQEVDKSLGGPHPEVFFEVLRQCGALKVLFPEIDALFGVPQPEKWHPEIDTGLHTMMVLAQSSSMTEEKAVRFAALVHDLGKALSPKEHWPKHHGHGQKGLPVIKSLCERLRVPNEYRDLALLVSDQHQNVHQAFELRSETIIKLFDKADFWRKPERLKQLLLACIADMRGRTGFEHQPYPQSDYLNACFLAANNVDVKAIIAAGFQGAQIKEVVNSKRIEMVAQVKQHWPGAQAKETP</sequence>
<organism>
    <name type="scientific">Shewanella sp. (strain MR-4)</name>
    <dbReference type="NCBI Taxonomy" id="60480"/>
    <lineage>
        <taxon>Bacteria</taxon>
        <taxon>Pseudomonadati</taxon>
        <taxon>Pseudomonadota</taxon>
        <taxon>Gammaproteobacteria</taxon>
        <taxon>Alteromonadales</taxon>
        <taxon>Shewanellaceae</taxon>
        <taxon>Shewanella</taxon>
    </lineage>
</organism>
<reference key="1">
    <citation type="submission" date="2006-08" db="EMBL/GenBank/DDBJ databases">
        <title>Complete sequence of Shewanella sp. MR-4.</title>
        <authorList>
            <consortium name="US DOE Joint Genome Institute"/>
            <person name="Copeland A."/>
            <person name="Lucas S."/>
            <person name="Lapidus A."/>
            <person name="Barry K."/>
            <person name="Detter J.C."/>
            <person name="Glavina del Rio T."/>
            <person name="Hammon N."/>
            <person name="Israni S."/>
            <person name="Dalin E."/>
            <person name="Tice H."/>
            <person name="Pitluck S."/>
            <person name="Kiss H."/>
            <person name="Brettin T."/>
            <person name="Bruce D."/>
            <person name="Han C."/>
            <person name="Tapia R."/>
            <person name="Gilna P."/>
            <person name="Schmutz J."/>
            <person name="Larimer F."/>
            <person name="Land M."/>
            <person name="Hauser L."/>
            <person name="Kyrpides N."/>
            <person name="Mikhailova N."/>
            <person name="Nealson K."/>
            <person name="Konstantinidis K."/>
            <person name="Klappenbach J."/>
            <person name="Tiedje J."/>
            <person name="Richardson P."/>
        </authorList>
    </citation>
    <scope>NUCLEOTIDE SEQUENCE [LARGE SCALE GENOMIC DNA]</scope>
    <source>
        <strain>MR-4</strain>
    </source>
</reference>
<comment type="function">
    <text evidence="1">Catalyzes the addition and repair of the essential 3'-terminal CCA sequence in tRNAs without using a nucleic acid template. Adds these three nucleotides in the order of C, C, and A to the tRNA nucleotide-73, using CTP and ATP as substrates and producing inorganic pyrophosphate. tRNA 3'-terminal CCA addition is required both for tRNA processing and repair. Also involved in tRNA surveillance by mediating tandem CCA addition to generate a CCACCA at the 3' terminus of unstable tRNAs. While stable tRNAs receive only 3'-terminal CCA, unstable tRNAs are marked with CCACCA and rapidly degraded.</text>
</comment>
<comment type="catalytic activity">
    <reaction evidence="1">
        <text>a tRNA precursor + 2 CTP + ATP = a tRNA with a 3' CCA end + 3 diphosphate</text>
        <dbReference type="Rhea" id="RHEA:14433"/>
        <dbReference type="Rhea" id="RHEA-COMP:10465"/>
        <dbReference type="Rhea" id="RHEA-COMP:10468"/>
        <dbReference type="ChEBI" id="CHEBI:30616"/>
        <dbReference type="ChEBI" id="CHEBI:33019"/>
        <dbReference type="ChEBI" id="CHEBI:37563"/>
        <dbReference type="ChEBI" id="CHEBI:74896"/>
        <dbReference type="ChEBI" id="CHEBI:83071"/>
        <dbReference type="EC" id="2.7.7.72"/>
    </reaction>
</comment>
<comment type="catalytic activity">
    <reaction evidence="1">
        <text>a tRNA with a 3' CCA end + 2 CTP + ATP = a tRNA with a 3' CCACCA end + 3 diphosphate</text>
        <dbReference type="Rhea" id="RHEA:76235"/>
        <dbReference type="Rhea" id="RHEA-COMP:10468"/>
        <dbReference type="Rhea" id="RHEA-COMP:18655"/>
        <dbReference type="ChEBI" id="CHEBI:30616"/>
        <dbReference type="ChEBI" id="CHEBI:33019"/>
        <dbReference type="ChEBI" id="CHEBI:37563"/>
        <dbReference type="ChEBI" id="CHEBI:83071"/>
        <dbReference type="ChEBI" id="CHEBI:195187"/>
    </reaction>
    <physiologicalReaction direction="left-to-right" evidence="1">
        <dbReference type="Rhea" id="RHEA:76236"/>
    </physiologicalReaction>
</comment>
<comment type="cofactor">
    <cofactor evidence="1">
        <name>Mg(2+)</name>
        <dbReference type="ChEBI" id="CHEBI:18420"/>
    </cofactor>
    <text evidence="1">Magnesium is required for nucleotidyltransferase activity.</text>
</comment>
<comment type="cofactor">
    <cofactor evidence="1">
        <name>Ni(2+)</name>
        <dbReference type="ChEBI" id="CHEBI:49786"/>
    </cofactor>
    <text evidence="1">Nickel for phosphatase activity.</text>
</comment>
<comment type="subunit">
    <text evidence="1">Monomer. Can also form homodimers and oligomers.</text>
</comment>
<comment type="domain">
    <text evidence="1">Comprises two domains: an N-terminal domain containing the nucleotidyltransferase activity and a C-terminal HD domain associated with both phosphodiesterase and phosphatase activities.</text>
</comment>
<comment type="miscellaneous">
    <text evidence="1">A single active site specifically recognizes both ATP and CTP and is responsible for their addition.</text>
</comment>
<comment type="similarity">
    <text evidence="1">Belongs to the tRNA nucleotidyltransferase/poly(A) polymerase family. Bacterial CCA-adding enzyme type 1 subfamily.</text>
</comment>
<evidence type="ECO:0000255" key="1">
    <source>
        <dbReference type="HAMAP-Rule" id="MF_01261"/>
    </source>
</evidence>
<name>CCA_SHESM</name>
<dbReference type="EC" id="2.7.7.72" evidence="1"/>
<dbReference type="EC" id="3.1.3.-" evidence="1"/>
<dbReference type="EC" id="3.1.4.-" evidence="1"/>
<dbReference type="EMBL" id="CP000446">
    <property type="protein sequence ID" value="ABI39968.1"/>
    <property type="molecule type" value="Genomic_DNA"/>
</dbReference>
<dbReference type="RefSeq" id="WP_011623647.1">
    <property type="nucleotide sequence ID" value="NC_008321.1"/>
</dbReference>
<dbReference type="SMR" id="Q0HG49"/>
<dbReference type="KEGG" id="she:Shewmr4_2897"/>
<dbReference type="HOGENOM" id="CLU_015961_1_1_6"/>
<dbReference type="GO" id="GO:0005524">
    <property type="term" value="F:ATP binding"/>
    <property type="evidence" value="ECO:0007669"/>
    <property type="project" value="UniProtKB-UniRule"/>
</dbReference>
<dbReference type="GO" id="GO:0004810">
    <property type="term" value="F:CCA tRNA nucleotidyltransferase activity"/>
    <property type="evidence" value="ECO:0007669"/>
    <property type="project" value="UniProtKB-UniRule"/>
</dbReference>
<dbReference type="GO" id="GO:0004112">
    <property type="term" value="F:cyclic-nucleotide phosphodiesterase activity"/>
    <property type="evidence" value="ECO:0007669"/>
    <property type="project" value="UniProtKB-UniRule"/>
</dbReference>
<dbReference type="GO" id="GO:0000287">
    <property type="term" value="F:magnesium ion binding"/>
    <property type="evidence" value="ECO:0007669"/>
    <property type="project" value="UniProtKB-UniRule"/>
</dbReference>
<dbReference type="GO" id="GO:0016791">
    <property type="term" value="F:phosphatase activity"/>
    <property type="evidence" value="ECO:0007669"/>
    <property type="project" value="UniProtKB-UniRule"/>
</dbReference>
<dbReference type="GO" id="GO:0000049">
    <property type="term" value="F:tRNA binding"/>
    <property type="evidence" value="ECO:0007669"/>
    <property type="project" value="UniProtKB-UniRule"/>
</dbReference>
<dbReference type="GO" id="GO:0042245">
    <property type="term" value="P:RNA repair"/>
    <property type="evidence" value="ECO:0007669"/>
    <property type="project" value="UniProtKB-KW"/>
</dbReference>
<dbReference type="GO" id="GO:0001680">
    <property type="term" value="P:tRNA 3'-terminal CCA addition"/>
    <property type="evidence" value="ECO:0007669"/>
    <property type="project" value="UniProtKB-UniRule"/>
</dbReference>
<dbReference type="CDD" id="cd00077">
    <property type="entry name" value="HDc"/>
    <property type="match status" value="1"/>
</dbReference>
<dbReference type="CDD" id="cd05398">
    <property type="entry name" value="NT_ClassII-CCAase"/>
    <property type="match status" value="1"/>
</dbReference>
<dbReference type="FunFam" id="1.10.3090.10:FF:000001">
    <property type="entry name" value="Multifunctional CCA protein"/>
    <property type="match status" value="1"/>
</dbReference>
<dbReference type="Gene3D" id="3.30.460.10">
    <property type="entry name" value="Beta Polymerase, domain 2"/>
    <property type="match status" value="1"/>
</dbReference>
<dbReference type="Gene3D" id="1.10.3090.10">
    <property type="entry name" value="cca-adding enzyme, domain 2"/>
    <property type="match status" value="1"/>
</dbReference>
<dbReference type="HAMAP" id="MF_01261">
    <property type="entry name" value="CCA_bact_type1"/>
    <property type="match status" value="1"/>
</dbReference>
<dbReference type="HAMAP" id="MF_01262">
    <property type="entry name" value="CCA_bact_type2"/>
    <property type="match status" value="1"/>
</dbReference>
<dbReference type="InterPro" id="IPR012006">
    <property type="entry name" value="CCA_bact"/>
</dbReference>
<dbReference type="InterPro" id="IPR003607">
    <property type="entry name" value="HD/PDEase_dom"/>
</dbReference>
<dbReference type="InterPro" id="IPR006674">
    <property type="entry name" value="HD_domain"/>
</dbReference>
<dbReference type="InterPro" id="IPR043519">
    <property type="entry name" value="NT_sf"/>
</dbReference>
<dbReference type="InterPro" id="IPR002646">
    <property type="entry name" value="PolA_pol_head_dom"/>
</dbReference>
<dbReference type="InterPro" id="IPR032828">
    <property type="entry name" value="PolyA_RNA-bd"/>
</dbReference>
<dbReference type="InterPro" id="IPR050124">
    <property type="entry name" value="tRNA_CCA-adding_enzyme"/>
</dbReference>
<dbReference type="NCBIfam" id="NF008137">
    <property type="entry name" value="PRK10885.1"/>
    <property type="match status" value="1"/>
</dbReference>
<dbReference type="PANTHER" id="PTHR47545">
    <property type="entry name" value="MULTIFUNCTIONAL CCA PROTEIN"/>
    <property type="match status" value="1"/>
</dbReference>
<dbReference type="PANTHER" id="PTHR47545:SF1">
    <property type="entry name" value="MULTIFUNCTIONAL CCA PROTEIN"/>
    <property type="match status" value="1"/>
</dbReference>
<dbReference type="Pfam" id="PF01966">
    <property type="entry name" value="HD"/>
    <property type="match status" value="1"/>
</dbReference>
<dbReference type="Pfam" id="PF01743">
    <property type="entry name" value="PolyA_pol"/>
    <property type="match status" value="1"/>
</dbReference>
<dbReference type="Pfam" id="PF12627">
    <property type="entry name" value="PolyA_pol_RNAbd"/>
    <property type="match status" value="1"/>
</dbReference>
<dbReference type="PIRSF" id="PIRSF000813">
    <property type="entry name" value="CCA_bact"/>
    <property type="match status" value="1"/>
</dbReference>
<dbReference type="SUPFAM" id="SSF81301">
    <property type="entry name" value="Nucleotidyltransferase"/>
    <property type="match status" value="1"/>
</dbReference>
<dbReference type="SUPFAM" id="SSF81891">
    <property type="entry name" value="Poly A polymerase C-terminal region-like"/>
    <property type="match status" value="1"/>
</dbReference>
<dbReference type="PROSITE" id="PS51831">
    <property type="entry name" value="HD"/>
    <property type="match status" value="1"/>
</dbReference>
<keyword id="KW-0067">ATP-binding</keyword>
<keyword id="KW-0378">Hydrolase</keyword>
<keyword id="KW-0460">Magnesium</keyword>
<keyword id="KW-0479">Metal-binding</keyword>
<keyword id="KW-0511">Multifunctional enzyme</keyword>
<keyword id="KW-0533">Nickel</keyword>
<keyword id="KW-0547">Nucleotide-binding</keyword>
<keyword id="KW-0548">Nucleotidyltransferase</keyword>
<keyword id="KW-0692">RNA repair</keyword>
<keyword id="KW-0694">RNA-binding</keyword>
<keyword id="KW-0808">Transferase</keyword>
<keyword id="KW-0819">tRNA processing</keyword>
<protein>
    <recommendedName>
        <fullName evidence="1">Multifunctional CCA protein</fullName>
    </recommendedName>
    <domain>
        <recommendedName>
            <fullName evidence="1">CCA-adding enzyme</fullName>
            <ecNumber evidence="1">2.7.7.72</ecNumber>
        </recommendedName>
        <alternativeName>
            <fullName evidence="1">CCA tRNA nucleotidyltransferase</fullName>
        </alternativeName>
        <alternativeName>
            <fullName evidence="1">tRNA CCA-pyrophosphorylase</fullName>
        </alternativeName>
        <alternativeName>
            <fullName evidence="1">tRNA adenylyl-/cytidylyl-transferase</fullName>
        </alternativeName>
        <alternativeName>
            <fullName evidence="1">tRNA nucleotidyltransferase</fullName>
        </alternativeName>
        <alternativeName>
            <fullName evidence="1">tRNA-NT</fullName>
        </alternativeName>
    </domain>
    <domain>
        <recommendedName>
            <fullName evidence="1">2'-nucleotidase</fullName>
            <ecNumber evidence="1">3.1.3.-</ecNumber>
        </recommendedName>
    </domain>
    <domain>
        <recommendedName>
            <fullName evidence="1">2',3'-cyclic phosphodiesterase</fullName>
            <ecNumber evidence="1">3.1.4.-</ecNumber>
        </recommendedName>
    </domain>
    <domain>
        <recommendedName>
            <fullName evidence="1">Phosphatase</fullName>
            <ecNumber evidence="1">3.1.3.-</ecNumber>
        </recommendedName>
    </domain>
</protein>
<feature type="chain" id="PRO_1000054297" description="Multifunctional CCA protein">
    <location>
        <begin position="1"/>
        <end position="416"/>
    </location>
</feature>
<feature type="domain" description="HD" evidence="1">
    <location>
        <begin position="228"/>
        <end position="329"/>
    </location>
</feature>
<feature type="binding site" evidence="1">
    <location>
        <position position="8"/>
    </location>
    <ligand>
        <name>ATP</name>
        <dbReference type="ChEBI" id="CHEBI:30616"/>
    </ligand>
</feature>
<feature type="binding site" evidence="1">
    <location>
        <position position="8"/>
    </location>
    <ligand>
        <name>CTP</name>
        <dbReference type="ChEBI" id="CHEBI:37563"/>
    </ligand>
</feature>
<feature type="binding site" evidence="1">
    <location>
        <position position="11"/>
    </location>
    <ligand>
        <name>ATP</name>
        <dbReference type="ChEBI" id="CHEBI:30616"/>
    </ligand>
</feature>
<feature type="binding site" evidence="1">
    <location>
        <position position="11"/>
    </location>
    <ligand>
        <name>CTP</name>
        <dbReference type="ChEBI" id="CHEBI:37563"/>
    </ligand>
</feature>
<feature type="binding site" evidence="1">
    <location>
        <position position="21"/>
    </location>
    <ligand>
        <name>Mg(2+)</name>
        <dbReference type="ChEBI" id="CHEBI:18420"/>
    </ligand>
</feature>
<feature type="binding site" evidence="1">
    <location>
        <position position="23"/>
    </location>
    <ligand>
        <name>Mg(2+)</name>
        <dbReference type="ChEBI" id="CHEBI:18420"/>
    </ligand>
</feature>
<feature type="binding site" evidence="1">
    <location>
        <position position="91"/>
    </location>
    <ligand>
        <name>ATP</name>
        <dbReference type="ChEBI" id="CHEBI:30616"/>
    </ligand>
</feature>
<feature type="binding site" evidence="1">
    <location>
        <position position="91"/>
    </location>
    <ligand>
        <name>CTP</name>
        <dbReference type="ChEBI" id="CHEBI:37563"/>
    </ligand>
</feature>
<feature type="binding site" evidence="1">
    <location>
        <position position="137"/>
    </location>
    <ligand>
        <name>ATP</name>
        <dbReference type="ChEBI" id="CHEBI:30616"/>
    </ligand>
</feature>
<feature type="binding site" evidence="1">
    <location>
        <position position="137"/>
    </location>
    <ligand>
        <name>CTP</name>
        <dbReference type="ChEBI" id="CHEBI:37563"/>
    </ligand>
</feature>
<feature type="binding site" evidence="1">
    <location>
        <position position="140"/>
    </location>
    <ligand>
        <name>ATP</name>
        <dbReference type="ChEBI" id="CHEBI:30616"/>
    </ligand>
</feature>
<feature type="binding site" evidence="1">
    <location>
        <position position="140"/>
    </location>
    <ligand>
        <name>CTP</name>
        <dbReference type="ChEBI" id="CHEBI:37563"/>
    </ligand>
</feature>
<accession>Q0HG49</accession>